<comment type="function">
    <text evidence="1">Cold-inducible mRNA binding protein. Acts cooperatively with elavl1/elrA to stabilize AU-rich element (ARE)-containing mRNAs by binding to themm and inhibiting their deadenylation. Essential for embryonic gastrulation and neural development, acting to maintain the expression of a set of adhesion molecules, and cell movement during embryogenesis. Required for pronephros development (By similarity).</text>
</comment>
<comment type="subunit">
    <text evidence="3">Interacts with prmt1. Interacts with elavl1/elrA (via RRM3). Associates with ribosomes (By similarity).</text>
</comment>
<comment type="subcellular location">
    <subcellularLocation>
        <location evidence="3">Nucleus</location>
        <location evidence="3">Nucleoplasm</location>
    </subcellularLocation>
    <subcellularLocation>
        <location evidence="3">Cytoplasm</location>
    </subcellularLocation>
    <text evidence="3">Shuttles between the nucleus and cytoplasm. Predominantly cytoplasmic in oocytes. Translocates from the nucleus to the cytoplasm upon arginine methylation (By similarity).</text>
</comment>
<comment type="domain">
    <text evidence="3">The glycine-rich domain, which contains a number of RGG motifs, is necessary to regulate nucleocytoplasmic localization.</text>
</comment>
<comment type="PTM">
    <text evidence="3">Methylated on arginine residues within RGG motifs. Methylation by prmt1 promotes cytoplasmic accumulation (By similarity).</text>
</comment>
<keyword id="KW-0963">Cytoplasm</keyword>
<keyword id="KW-0217">Developmental protein</keyword>
<keyword id="KW-0488">Methylation</keyword>
<keyword id="KW-0539">Nucleus</keyword>
<keyword id="KW-1185">Reference proteome</keyword>
<keyword id="KW-0694">RNA-binding</keyword>
<keyword id="KW-0346">Stress response</keyword>
<reference evidence="6" key="1">
    <citation type="submission" date="2006-10" db="EMBL/GenBank/DDBJ databases">
        <authorList>
            <consortium name="Sanger Xenopus tropicalis EST/cDNA project"/>
        </authorList>
    </citation>
    <scope>NUCLEOTIDE SEQUENCE [LARGE SCALE MRNA]</scope>
    <source>
        <tissue evidence="6">Neurula</tissue>
    </source>
</reference>
<dbReference type="EMBL" id="CR760272">
    <property type="protein sequence ID" value="CAJ83306.1"/>
    <property type="molecule type" value="mRNA"/>
</dbReference>
<dbReference type="RefSeq" id="NP_001017228.1">
    <property type="nucleotide sequence ID" value="NM_001017228.3"/>
</dbReference>
<dbReference type="RefSeq" id="XP_031756542.1">
    <property type="nucleotide sequence ID" value="XM_031900682.1"/>
</dbReference>
<dbReference type="SMR" id="Q28IQ9"/>
<dbReference type="FunCoup" id="Q28IQ9">
    <property type="interactions" value="2725"/>
</dbReference>
<dbReference type="STRING" id="8364.ENSXETP00000001803"/>
<dbReference type="GeneID" id="549982"/>
<dbReference type="KEGG" id="xtr:549982"/>
<dbReference type="AGR" id="Xenbase:XB-GENE-492781"/>
<dbReference type="CTD" id="1153"/>
<dbReference type="Xenbase" id="XB-GENE-492781">
    <property type="gene designation" value="cirbp"/>
</dbReference>
<dbReference type="InParanoid" id="Q28IQ9"/>
<dbReference type="OMA" id="GWEDRSY"/>
<dbReference type="OrthoDB" id="4207594at2759"/>
<dbReference type="Proteomes" id="UP000008143">
    <property type="component" value="Chromosome 1"/>
</dbReference>
<dbReference type="Bgee" id="ENSXETG00000003281">
    <property type="expression patterns" value="Expressed in neurula embryo and 36 other cell types or tissues"/>
</dbReference>
<dbReference type="GO" id="GO:0005737">
    <property type="term" value="C:cytoplasm"/>
    <property type="evidence" value="ECO:0000250"/>
    <property type="project" value="UniProtKB"/>
</dbReference>
<dbReference type="GO" id="GO:0005654">
    <property type="term" value="C:nucleoplasm"/>
    <property type="evidence" value="ECO:0007669"/>
    <property type="project" value="UniProtKB-SubCell"/>
</dbReference>
<dbReference type="GO" id="GO:0005634">
    <property type="term" value="C:nucleus"/>
    <property type="evidence" value="ECO:0000250"/>
    <property type="project" value="UniProtKB"/>
</dbReference>
<dbReference type="GO" id="GO:0019899">
    <property type="term" value="F:enzyme binding"/>
    <property type="evidence" value="ECO:0000250"/>
    <property type="project" value="UniProtKB"/>
</dbReference>
<dbReference type="GO" id="GO:0003730">
    <property type="term" value="F:mRNA 3'-UTR binding"/>
    <property type="evidence" value="ECO:0000250"/>
    <property type="project" value="UniProtKB"/>
</dbReference>
<dbReference type="GO" id="GO:0003729">
    <property type="term" value="F:mRNA binding"/>
    <property type="evidence" value="ECO:0000250"/>
    <property type="project" value="UniProtKB"/>
</dbReference>
<dbReference type="GO" id="GO:0043022">
    <property type="term" value="F:ribosome binding"/>
    <property type="evidence" value="ECO:0000250"/>
    <property type="project" value="UniProtKB"/>
</dbReference>
<dbReference type="GO" id="GO:0016477">
    <property type="term" value="P:cell migration"/>
    <property type="evidence" value="ECO:0000250"/>
    <property type="project" value="UniProtKB"/>
</dbReference>
<dbReference type="GO" id="GO:0009792">
    <property type="term" value="P:embryo development ending in birth or egg hatching"/>
    <property type="evidence" value="ECO:0000250"/>
    <property type="project" value="UniProtKB"/>
</dbReference>
<dbReference type="GO" id="GO:0007369">
    <property type="term" value="P:gastrulation"/>
    <property type="evidence" value="ECO:0000250"/>
    <property type="project" value="UniProtKB"/>
</dbReference>
<dbReference type="GO" id="GO:0048255">
    <property type="term" value="P:mRNA stabilization"/>
    <property type="evidence" value="ECO:0000250"/>
    <property type="project" value="UniProtKB"/>
</dbReference>
<dbReference type="GO" id="GO:0060212">
    <property type="term" value="P:negative regulation of nuclear-transcribed mRNA poly(A) tail shortening"/>
    <property type="evidence" value="ECO:0000250"/>
    <property type="project" value="UniProtKB"/>
</dbReference>
<dbReference type="GO" id="GO:0022008">
    <property type="term" value="P:neurogenesis"/>
    <property type="evidence" value="ECO:0000250"/>
    <property type="project" value="UniProtKB"/>
</dbReference>
<dbReference type="GO" id="GO:0045727">
    <property type="term" value="P:positive regulation of translation"/>
    <property type="evidence" value="ECO:0000250"/>
    <property type="project" value="UniProtKB"/>
</dbReference>
<dbReference type="GO" id="GO:0048793">
    <property type="term" value="P:pronephros development"/>
    <property type="evidence" value="ECO:0000250"/>
    <property type="project" value="UniProtKB"/>
</dbReference>
<dbReference type="GO" id="GO:0009409">
    <property type="term" value="P:response to cold"/>
    <property type="evidence" value="ECO:0000250"/>
    <property type="project" value="UniProtKB"/>
</dbReference>
<dbReference type="CDD" id="cd12449">
    <property type="entry name" value="RRM_CIRBP_RBM3"/>
    <property type="match status" value="1"/>
</dbReference>
<dbReference type="FunFam" id="3.30.70.330:FF:000174">
    <property type="entry name" value="cold-inducible RNA-binding protein isoform X2"/>
    <property type="match status" value="1"/>
</dbReference>
<dbReference type="Gene3D" id="3.30.70.330">
    <property type="match status" value="1"/>
</dbReference>
<dbReference type="InterPro" id="IPR012677">
    <property type="entry name" value="Nucleotide-bd_a/b_plait_sf"/>
</dbReference>
<dbReference type="InterPro" id="IPR035979">
    <property type="entry name" value="RBD_domain_sf"/>
</dbReference>
<dbReference type="InterPro" id="IPR050441">
    <property type="entry name" value="RBM"/>
</dbReference>
<dbReference type="InterPro" id="IPR034278">
    <property type="entry name" value="RBM3/CIRBP_RRM"/>
</dbReference>
<dbReference type="InterPro" id="IPR000504">
    <property type="entry name" value="RRM_dom"/>
</dbReference>
<dbReference type="InterPro" id="IPR003954">
    <property type="entry name" value="RRM_dom_euk"/>
</dbReference>
<dbReference type="PANTHER" id="PTHR48034">
    <property type="entry name" value="TRANSFORMER-2 SEX-DETERMINING PROTEIN-RELATED"/>
    <property type="match status" value="1"/>
</dbReference>
<dbReference type="Pfam" id="PF00076">
    <property type="entry name" value="RRM_1"/>
    <property type="match status" value="1"/>
</dbReference>
<dbReference type="SMART" id="SM00360">
    <property type="entry name" value="RRM"/>
    <property type="match status" value="1"/>
</dbReference>
<dbReference type="SMART" id="SM00361">
    <property type="entry name" value="RRM_1"/>
    <property type="match status" value="1"/>
</dbReference>
<dbReference type="SUPFAM" id="SSF54928">
    <property type="entry name" value="RNA-binding domain, RBD"/>
    <property type="match status" value="1"/>
</dbReference>
<dbReference type="PROSITE" id="PS50102">
    <property type="entry name" value="RRM"/>
    <property type="match status" value="1"/>
</dbReference>
<name>CIRBP_XENTR</name>
<organism>
    <name type="scientific">Xenopus tropicalis</name>
    <name type="common">Western clawed frog</name>
    <name type="synonym">Silurana tropicalis</name>
    <dbReference type="NCBI Taxonomy" id="8364"/>
    <lineage>
        <taxon>Eukaryota</taxon>
        <taxon>Metazoa</taxon>
        <taxon>Chordata</taxon>
        <taxon>Craniata</taxon>
        <taxon>Vertebrata</taxon>
        <taxon>Euteleostomi</taxon>
        <taxon>Amphibia</taxon>
        <taxon>Batrachia</taxon>
        <taxon>Anura</taxon>
        <taxon>Pipoidea</taxon>
        <taxon>Pipidae</taxon>
        <taxon>Xenopodinae</taxon>
        <taxon>Xenopus</taxon>
        <taxon>Silurana</taxon>
    </lineage>
</organism>
<proteinExistence type="evidence at transcript level"/>
<feature type="chain" id="PRO_0000390931" description="Cold-inducible RNA-binding protein">
    <location>
        <begin position="1"/>
        <end position="166"/>
    </location>
</feature>
<feature type="domain" description="RRM" evidence="4">
    <location>
        <begin position="6"/>
        <end position="84"/>
    </location>
</feature>
<feature type="region of interest" description="Disordered" evidence="5">
    <location>
        <begin position="68"/>
        <end position="166"/>
    </location>
</feature>
<feature type="compositionally biased region" description="Gly residues" evidence="5">
    <location>
        <begin position="93"/>
        <end position="120"/>
    </location>
</feature>
<feature type="compositionally biased region" description="Low complexity" evidence="5">
    <location>
        <begin position="121"/>
        <end position="166"/>
    </location>
</feature>
<protein>
    <recommendedName>
        <fullName evidence="6">Cold-inducible RNA-binding protein</fullName>
    </recommendedName>
    <alternativeName>
        <fullName evidence="2">Glycine-rich RNA-binding protein CIRP</fullName>
    </alternativeName>
</protein>
<evidence type="ECO:0000250" key="1"/>
<evidence type="ECO:0000250" key="2">
    <source>
        <dbReference type="UniProtKB" id="Q14011"/>
    </source>
</evidence>
<evidence type="ECO:0000250" key="3">
    <source>
        <dbReference type="UniProtKB" id="Q9DED4"/>
    </source>
</evidence>
<evidence type="ECO:0000255" key="4">
    <source>
        <dbReference type="PROSITE-ProRule" id="PRU00176"/>
    </source>
</evidence>
<evidence type="ECO:0000256" key="5">
    <source>
        <dbReference type="SAM" id="MobiDB-lite"/>
    </source>
</evidence>
<evidence type="ECO:0000312" key="6">
    <source>
        <dbReference type="EMBL" id="CAJ83306.1"/>
    </source>
</evidence>
<accession>Q28IQ9</accession>
<sequence>MSCDEGKLFVGGLNFETTEESLEQVFSKYGQVAEVVVVKDRESKRSRGFGFVTFENPEDAKDAMMAMNGKSVDGRQIRVDQAGKSSNDRRGGYRGGSSGGRGFFRGGRGRGGGGDRGYGGSSRFENRSGGYQSSGSRDYYGRSHGSYGDRSGGSYRDSYDSYTTQE</sequence>
<gene>
    <name evidence="6" type="primary">cirbp</name>
    <name type="ORF">TNeu081o03.1</name>
</gene>